<reference key="1">
    <citation type="journal article" date="2003" name="Proc. Natl. Acad. Sci. U.S.A.">
        <title>Complete genome sequence and analysis of Wolinella succinogenes.</title>
        <authorList>
            <person name="Baar C."/>
            <person name="Eppinger M."/>
            <person name="Raddatz G."/>
            <person name="Simon J."/>
            <person name="Lanz C."/>
            <person name="Klimmek O."/>
            <person name="Nandakumar R."/>
            <person name="Gross R."/>
            <person name="Rosinus A."/>
            <person name="Keller H."/>
            <person name="Jagtap P."/>
            <person name="Linke B."/>
            <person name="Meyer F."/>
            <person name="Lederer H."/>
            <person name="Schuster S.C."/>
        </authorList>
    </citation>
    <scope>NUCLEOTIDE SEQUENCE [LARGE SCALE GENOMIC DNA]</scope>
    <source>
        <strain>ATCC 29543 / DSM 1740 / CCUG 13145 / JCM 31913 / LMG 7466 / NCTC 11488 / FDC 602W</strain>
    </source>
</reference>
<feature type="chain" id="PRO_0000268564" description="Bifunctional protein FolD">
    <location>
        <begin position="1"/>
        <end position="286"/>
    </location>
</feature>
<feature type="binding site" evidence="1">
    <location>
        <begin position="164"/>
        <end position="166"/>
    </location>
    <ligand>
        <name>NADP(+)</name>
        <dbReference type="ChEBI" id="CHEBI:58349"/>
    </ligand>
</feature>
<feature type="binding site" evidence="1">
    <location>
        <position position="189"/>
    </location>
    <ligand>
        <name>NADP(+)</name>
        <dbReference type="ChEBI" id="CHEBI:58349"/>
    </ligand>
</feature>
<feature type="binding site" evidence="1">
    <location>
        <position position="230"/>
    </location>
    <ligand>
        <name>NADP(+)</name>
        <dbReference type="ChEBI" id="CHEBI:58349"/>
    </ligand>
</feature>
<evidence type="ECO:0000255" key="1">
    <source>
        <dbReference type="HAMAP-Rule" id="MF_01576"/>
    </source>
</evidence>
<name>FOLD_WOLSU</name>
<dbReference type="EC" id="1.5.1.5" evidence="1"/>
<dbReference type="EC" id="3.5.4.9" evidence="1"/>
<dbReference type="EMBL" id="BX571660">
    <property type="protein sequence ID" value="CAE10416.1"/>
    <property type="molecule type" value="Genomic_DNA"/>
</dbReference>
<dbReference type="RefSeq" id="WP_011139202.1">
    <property type="nucleotide sequence ID" value="NC_005090.1"/>
</dbReference>
<dbReference type="SMR" id="Q7M8X1"/>
<dbReference type="STRING" id="273121.WS1345"/>
<dbReference type="KEGG" id="wsu:WS1345"/>
<dbReference type="eggNOG" id="COG0190">
    <property type="taxonomic scope" value="Bacteria"/>
</dbReference>
<dbReference type="HOGENOM" id="CLU_034045_2_1_7"/>
<dbReference type="UniPathway" id="UPA00193"/>
<dbReference type="Proteomes" id="UP000000422">
    <property type="component" value="Chromosome"/>
</dbReference>
<dbReference type="GO" id="GO:0005829">
    <property type="term" value="C:cytosol"/>
    <property type="evidence" value="ECO:0007669"/>
    <property type="project" value="TreeGrafter"/>
</dbReference>
<dbReference type="GO" id="GO:0004477">
    <property type="term" value="F:methenyltetrahydrofolate cyclohydrolase activity"/>
    <property type="evidence" value="ECO:0007669"/>
    <property type="project" value="UniProtKB-UniRule"/>
</dbReference>
<dbReference type="GO" id="GO:0004488">
    <property type="term" value="F:methylenetetrahydrofolate dehydrogenase (NADP+) activity"/>
    <property type="evidence" value="ECO:0007669"/>
    <property type="project" value="UniProtKB-UniRule"/>
</dbReference>
<dbReference type="GO" id="GO:0000105">
    <property type="term" value="P:L-histidine biosynthetic process"/>
    <property type="evidence" value="ECO:0007669"/>
    <property type="project" value="UniProtKB-KW"/>
</dbReference>
<dbReference type="GO" id="GO:0009086">
    <property type="term" value="P:methionine biosynthetic process"/>
    <property type="evidence" value="ECO:0007669"/>
    <property type="project" value="UniProtKB-KW"/>
</dbReference>
<dbReference type="GO" id="GO:0006164">
    <property type="term" value="P:purine nucleotide biosynthetic process"/>
    <property type="evidence" value="ECO:0007669"/>
    <property type="project" value="UniProtKB-KW"/>
</dbReference>
<dbReference type="GO" id="GO:0035999">
    <property type="term" value="P:tetrahydrofolate interconversion"/>
    <property type="evidence" value="ECO:0007669"/>
    <property type="project" value="UniProtKB-UniRule"/>
</dbReference>
<dbReference type="CDD" id="cd01080">
    <property type="entry name" value="NAD_bind_m-THF_DH_Cyclohyd"/>
    <property type="match status" value="1"/>
</dbReference>
<dbReference type="FunFam" id="3.40.50.10860:FF:000001">
    <property type="entry name" value="Bifunctional protein FolD"/>
    <property type="match status" value="1"/>
</dbReference>
<dbReference type="FunFam" id="3.40.50.720:FF:000094">
    <property type="entry name" value="Bifunctional protein FolD"/>
    <property type="match status" value="1"/>
</dbReference>
<dbReference type="Gene3D" id="3.40.50.10860">
    <property type="entry name" value="Leucine Dehydrogenase, chain A, domain 1"/>
    <property type="match status" value="1"/>
</dbReference>
<dbReference type="Gene3D" id="3.40.50.720">
    <property type="entry name" value="NAD(P)-binding Rossmann-like Domain"/>
    <property type="match status" value="1"/>
</dbReference>
<dbReference type="HAMAP" id="MF_01576">
    <property type="entry name" value="THF_DHG_CYH"/>
    <property type="match status" value="1"/>
</dbReference>
<dbReference type="InterPro" id="IPR046346">
    <property type="entry name" value="Aminoacid_DH-like_N_sf"/>
</dbReference>
<dbReference type="InterPro" id="IPR036291">
    <property type="entry name" value="NAD(P)-bd_dom_sf"/>
</dbReference>
<dbReference type="InterPro" id="IPR000672">
    <property type="entry name" value="THF_DH/CycHdrlase"/>
</dbReference>
<dbReference type="InterPro" id="IPR020630">
    <property type="entry name" value="THF_DH/CycHdrlase_cat_dom"/>
</dbReference>
<dbReference type="InterPro" id="IPR020867">
    <property type="entry name" value="THF_DH/CycHdrlase_CS"/>
</dbReference>
<dbReference type="InterPro" id="IPR020631">
    <property type="entry name" value="THF_DH/CycHdrlase_NAD-bd_dom"/>
</dbReference>
<dbReference type="NCBIfam" id="NF008058">
    <property type="entry name" value="PRK10792.1"/>
    <property type="match status" value="1"/>
</dbReference>
<dbReference type="NCBIfam" id="NF010783">
    <property type="entry name" value="PRK14186.1"/>
    <property type="match status" value="1"/>
</dbReference>
<dbReference type="NCBIfam" id="NF010787">
    <property type="entry name" value="PRK14191.1"/>
    <property type="match status" value="1"/>
</dbReference>
<dbReference type="PANTHER" id="PTHR48099:SF5">
    <property type="entry name" value="C-1-TETRAHYDROFOLATE SYNTHASE, CYTOPLASMIC"/>
    <property type="match status" value="1"/>
</dbReference>
<dbReference type="PANTHER" id="PTHR48099">
    <property type="entry name" value="C-1-TETRAHYDROFOLATE SYNTHASE, CYTOPLASMIC-RELATED"/>
    <property type="match status" value="1"/>
</dbReference>
<dbReference type="Pfam" id="PF00763">
    <property type="entry name" value="THF_DHG_CYH"/>
    <property type="match status" value="1"/>
</dbReference>
<dbReference type="Pfam" id="PF02882">
    <property type="entry name" value="THF_DHG_CYH_C"/>
    <property type="match status" value="1"/>
</dbReference>
<dbReference type="PRINTS" id="PR00085">
    <property type="entry name" value="THFDHDRGNASE"/>
</dbReference>
<dbReference type="SUPFAM" id="SSF53223">
    <property type="entry name" value="Aminoacid dehydrogenase-like, N-terminal domain"/>
    <property type="match status" value="1"/>
</dbReference>
<dbReference type="SUPFAM" id="SSF51735">
    <property type="entry name" value="NAD(P)-binding Rossmann-fold domains"/>
    <property type="match status" value="1"/>
</dbReference>
<dbReference type="PROSITE" id="PS00766">
    <property type="entry name" value="THF_DHG_CYH_1"/>
    <property type="match status" value="1"/>
</dbReference>
<dbReference type="PROSITE" id="PS00767">
    <property type="entry name" value="THF_DHG_CYH_2"/>
    <property type="match status" value="1"/>
</dbReference>
<gene>
    <name evidence="1" type="primary">folD</name>
    <name type="ordered locus">WS1345</name>
</gene>
<keyword id="KW-0028">Amino-acid biosynthesis</keyword>
<keyword id="KW-0368">Histidine biosynthesis</keyword>
<keyword id="KW-0378">Hydrolase</keyword>
<keyword id="KW-0486">Methionine biosynthesis</keyword>
<keyword id="KW-0511">Multifunctional enzyme</keyword>
<keyword id="KW-0521">NADP</keyword>
<keyword id="KW-0554">One-carbon metabolism</keyword>
<keyword id="KW-0560">Oxidoreductase</keyword>
<keyword id="KW-0658">Purine biosynthesis</keyword>
<keyword id="KW-1185">Reference proteome</keyword>
<sequence length="286" mass="30092">MQLLDGKALSLEIEAKVKEEVMILTSSRGVTPGLAVILVGSDPASQAYVNMKAKACKRAGIYSITHEMPESTTESQLLNAISILNNDPNIDGILVQLPLPKHINTAKVLEAIAPHKDVDGFHPQNVGRLTSNLGGFAPATPMGVMRLLQKYGIDPQGKNAVIVGASNIVGKPMASLLLNANATTTLCHIYTKDLASHTQNADILCVGVGKPNLITESMVKKGAVVIDIGINRLEDGSLVGDVDFASVAPKCSYITPVPGGVGPMTIASLLENTLKAAKTRQETPQS</sequence>
<comment type="function">
    <text evidence="1">Catalyzes the oxidation of 5,10-methylenetetrahydrofolate to 5,10-methenyltetrahydrofolate and then the hydrolysis of 5,10-methenyltetrahydrofolate to 10-formyltetrahydrofolate.</text>
</comment>
<comment type="catalytic activity">
    <reaction evidence="1">
        <text>(6R)-5,10-methylene-5,6,7,8-tetrahydrofolate + NADP(+) = (6R)-5,10-methenyltetrahydrofolate + NADPH</text>
        <dbReference type="Rhea" id="RHEA:22812"/>
        <dbReference type="ChEBI" id="CHEBI:15636"/>
        <dbReference type="ChEBI" id="CHEBI:57455"/>
        <dbReference type="ChEBI" id="CHEBI:57783"/>
        <dbReference type="ChEBI" id="CHEBI:58349"/>
        <dbReference type="EC" id="1.5.1.5"/>
    </reaction>
</comment>
<comment type="catalytic activity">
    <reaction evidence="1">
        <text>(6R)-5,10-methenyltetrahydrofolate + H2O = (6R)-10-formyltetrahydrofolate + H(+)</text>
        <dbReference type="Rhea" id="RHEA:23700"/>
        <dbReference type="ChEBI" id="CHEBI:15377"/>
        <dbReference type="ChEBI" id="CHEBI:15378"/>
        <dbReference type="ChEBI" id="CHEBI:57455"/>
        <dbReference type="ChEBI" id="CHEBI:195366"/>
        <dbReference type="EC" id="3.5.4.9"/>
    </reaction>
</comment>
<comment type="pathway">
    <text evidence="1">One-carbon metabolism; tetrahydrofolate interconversion.</text>
</comment>
<comment type="subunit">
    <text evidence="1">Homodimer.</text>
</comment>
<comment type="similarity">
    <text evidence="1">Belongs to the tetrahydrofolate dehydrogenase/cyclohydrolase family.</text>
</comment>
<protein>
    <recommendedName>
        <fullName evidence="1">Bifunctional protein FolD</fullName>
    </recommendedName>
    <domain>
        <recommendedName>
            <fullName evidence="1">Methylenetetrahydrofolate dehydrogenase</fullName>
            <ecNumber evidence="1">1.5.1.5</ecNumber>
        </recommendedName>
    </domain>
    <domain>
        <recommendedName>
            <fullName evidence="1">Methenyltetrahydrofolate cyclohydrolase</fullName>
            <ecNumber evidence="1">3.5.4.9</ecNumber>
        </recommendedName>
    </domain>
</protein>
<proteinExistence type="inferred from homology"/>
<organism>
    <name type="scientific">Wolinella succinogenes (strain ATCC 29543 / DSM 1740 / CCUG 13145 / JCM 31913 / LMG 7466 / NCTC 11488 / FDC 602W)</name>
    <name type="common">Vibrio succinogenes</name>
    <dbReference type="NCBI Taxonomy" id="273121"/>
    <lineage>
        <taxon>Bacteria</taxon>
        <taxon>Pseudomonadati</taxon>
        <taxon>Campylobacterota</taxon>
        <taxon>Epsilonproteobacteria</taxon>
        <taxon>Campylobacterales</taxon>
        <taxon>Helicobacteraceae</taxon>
        <taxon>Wolinella</taxon>
    </lineage>
</organism>
<accession>Q7M8X1</accession>